<reference key="1">
    <citation type="journal article" date="2002" name="Science">
        <title>50 million years of genomic stasis in endosymbiotic bacteria.</title>
        <authorList>
            <person name="Tamas I."/>
            <person name="Klasson L."/>
            <person name="Canbaeck B."/>
            <person name="Naeslund A.K."/>
            <person name="Eriksson A.-S."/>
            <person name="Wernegreen J.J."/>
            <person name="Sandstroem J.P."/>
            <person name="Moran N.A."/>
            <person name="Andersson S.G.E."/>
        </authorList>
    </citation>
    <scope>NUCLEOTIDE SEQUENCE [LARGE SCALE GENOMIC DNA]</scope>
    <source>
        <strain>Sg</strain>
    </source>
</reference>
<name>PIT_BUCAP</name>
<proteinExistence type="inferred from homology"/>
<dbReference type="EMBL" id="AE013218">
    <property type="protein sequence ID" value="AAM68102.1"/>
    <property type="molecule type" value="Genomic_DNA"/>
</dbReference>
<dbReference type="RefSeq" id="WP_011054068.1">
    <property type="nucleotide sequence ID" value="NC_004061.1"/>
</dbReference>
<dbReference type="SMR" id="Q8K903"/>
<dbReference type="STRING" id="198804.BUsg_566"/>
<dbReference type="GeneID" id="93004044"/>
<dbReference type="KEGG" id="bas:BUsg_566"/>
<dbReference type="eggNOG" id="COG0306">
    <property type="taxonomic scope" value="Bacteria"/>
</dbReference>
<dbReference type="HOGENOM" id="CLU_015355_4_0_6"/>
<dbReference type="Proteomes" id="UP000000416">
    <property type="component" value="Chromosome"/>
</dbReference>
<dbReference type="GO" id="GO:0005886">
    <property type="term" value="C:plasma membrane"/>
    <property type="evidence" value="ECO:0007669"/>
    <property type="project" value="UniProtKB-SubCell"/>
</dbReference>
<dbReference type="GO" id="GO:0005315">
    <property type="term" value="F:phosphate transmembrane transporter activity"/>
    <property type="evidence" value="ECO:0007669"/>
    <property type="project" value="InterPro"/>
</dbReference>
<dbReference type="GO" id="GO:0015293">
    <property type="term" value="F:symporter activity"/>
    <property type="evidence" value="ECO:0007669"/>
    <property type="project" value="UniProtKB-KW"/>
</dbReference>
<dbReference type="GO" id="GO:0035435">
    <property type="term" value="P:phosphate ion transmembrane transport"/>
    <property type="evidence" value="ECO:0007669"/>
    <property type="project" value="TreeGrafter"/>
</dbReference>
<dbReference type="InterPro" id="IPR001204">
    <property type="entry name" value="Phos_transporter"/>
</dbReference>
<dbReference type="PANTHER" id="PTHR11101:SF65">
    <property type="entry name" value="LOW-AFFINITY INORGANIC PHOSPHATE TRANSPORTER PITA-RELATED"/>
    <property type="match status" value="1"/>
</dbReference>
<dbReference type="PANTHER" id="PTHR11101">
    <property type="entry name" value="PHOSPHATE TRANSPORTER"/>
    <property type="match status" value="1"/>
</dbReference>
<dbReference type="Pfam" id="PF01384">
    <property type="entry name" value="PHO4"/>
    <property type="match status" value="1"/>
</dbReference>
<keyword id="KW-1003">Cell membrane</keyword>
<keyword id="KW-0472">Membrane</keyword>
<keyword id="KW-0592">Phosphate transport</keyword>
<keyword id="KW-0769">Symport</keyword>
<keyword id="KW-0812">Transmembrane</keyword>
<keyword id="KW-1133">Transmembrane helix</keyword>
<keyword id="KW-0813">Transport</keyword>
<accession>Q8K903</accession>
<comment type="function">
    <text evidence="1">Low-affinity inorganic phosphate transporter.</text>
</comment>
<comment type="catalytic activity">
    <reaction evidence="1">
        <text>phosphate(in) + H(+)(in) = phosphate(out) + H(+)(out)</text>
        <dbReference type="Rhea" id="RHEA:29939"/>
        <dbReference type="ChEBI" id="CHEBI:15378"/>
        <dbReference type="ChEBI" id="CHEBI:43474"/>
    </reaction>
</comment>
<comment type="subcellular location">
    <subcellularLocation>
        <location evidence="3">Cell membrane</location>
        <topology evidence="2">Multi-pass membrane protein</topology>
    </subcellularLocation>
</comment>
<comment type="similarity">
    <text evidence="3">Belongs to the inorganic phosphate transporter (PiT) (TC 2.A.20) family. Pit subfamily.</text>
</comment>
<evidence type="ECO:0000250" key="1">
    <source>
        <dbReference type="UniProtKB" id="P0AFJ7"/>
    </source>
</evidence>
<evidence type="ECO:0000255" key="2"/>
<evidence type="ECO:0000305" key="3"/>
<feature type="chain" id="PRO_0000080788" description="Low-affinity inorganic phosphate transporter">
    <location>
        <begin position="1"/>
        <end position="493"/>
    </location>
</feature>
<feature type="transmembrane region" description="Helical" evidence="2">
    <location>
        <begin position="13"/>
        <end position="33"/>
    </location>
</feature>
<feature type="transmembrane region" description="Helical" evidence="2">
    <location>
        <begin position="52"/>
        <end position="72"/>
    </location>
</feature>
<feature type="transmembrane region" description="Helical" evidence="2">
    <location>
        <begin position="94"/>
        <end position="114"/>
    </location>
</feature>
<feature type="transmembrane region" description="Helical" evidence="2">
    <location>
        <begin position="124"/>
        <end position="144"/>
    </location>
</feature>
<feature type="transmembrane region" description="Helical" evidence="2">
    <location>
        <begin position="155"/>
        <end position="175"/>
    </location>
</feature>
<feature type="transmembrane region" description="Helical" evidence="2">
    <location>
        <begin position="207"/>
        <end position="227"/>
    </location>
</feature>
<feature type="transmembrane region" description="Helical" evidence="2">
    <location>
        <begin position="233"/>
        <end position="253"/>
    </location>
</feature>
<feature type="transmembrane region" description="Helical" evidence="2">
    <location>
        <begin position="373"/>
        <end position="393"/>
    </location>
</feature>
<feature type="transmembrane region" description="Helical" evidence="2">
    <location>
        <begin position="421"/>
        <end position="441"/>
    </location>
</feature>
<feature type="transmembrane region" description="Helical" evidence="2">
    <location>
        <begin position="470"/>
        <end position="490"/>
    </location>
</feature>
<organism>
    <name type="scientific">Buchnera aphidicola subsp. Schizaphis graminum (strain Sg)</name>
    <dbReference type="NCBI Taxonomy" id="198804"/>
    <lineage>
        <taxon>Bacteria</taxon>
        <taxon>Pseudomonadati</taxon>
        <taxon>Pseudomonadota</taxon>
        <taxon>Gammaproteobacteria</taxon>
        <taxon>Enterobacterales</taxon>
        <taxon>Erwiniaceae</taxon>
        <taxon>Buchnera</taxon>
    </lineage>
</organism>
<protein>
    <recommendedName>
        <fullName>Low-affinity inorganic phosphate transporter</fullName>
    </recommendedName>
</protein>
<gene>
    <name type="primary">pit</name>
    <name type="synonym">pitA</name>
    <name type="ordered locus">BUsg_566</name>
</gene>
<sequence>MLYLFSYSDLNHSLFILLALFFVLCYEAINGFHDTANAVSTLIYTRATSAHFAVIMSGLFNFLGVLLGGLTVAYAIVHLLPNDLLLNSNSKNALAMVFSMLLAAILWNLSTWYFCLPASSSHSLIGAIIGIGLTNAIITDSSLLHALNVPKMTNVFLSLIFSPIVGLIISGSLIFLLRFFLKKKKNHYRIHMTPLEREQKEGKKKPPFLIKIALILSSIGVSYAHGANDGQKGIGLLMLVLIGIAPCGFLVNLNASKKEIIYTKNTIDHLYEYYSKNKVKIIKNTKNQKKIDFSIKNYNYFEIIKNIKKTKFLLQNIYDFNQLNIKQRFKLRHFLLFLSENIDQTIHFSNIVKKEKDFLKKSKKDILKTIEYAPMWIILIIALSLSVGTMIGWKRIVVTIGEKIGKKRMTYAQAMSAQITASLSIGIASYTGIPVSTTHILSSSVAGAMLSDGDGIQISTIKNIALAWILTLPVSILLSGFFYWITLLFIKNF</sequence>